<reference key="1">
    <citation type="submission" date="2005-09" db="EMBL/GenBank/DDBJ databases">
        <title>Annotation of the Aspergillus terreus NIH2624 genome.</title>
        <authorList>
            <person name="Birren B.W."/>
            <person name="Lander E.S."/>
            <person name="Galagan J.E."/>
            <person name="Nusbaum C."/>
            <person name="Devon K."/>
            <person name="Henn M."/>
            <person name="Ma L.-J."/>
            <person name="Jaffe D.B."/>
            <person name="Butler J."/>
            <person name="Alvarez P."/>
            <person name="Gnerre S."/>
            <person name="Grabherr M."/>
            <person name="Kleber M."/>
            <person name="Mauceli E.W."/>
            <person name="Brockman W."/>
            <person name="Rounsley S."/>
            <person name="Young S.K."/>
            <person name="LaButti K."/>
            <person name="Pushparaj V."/>
            <person name="DeCaprio D."/>
            <person name="Crawford M."/>
            <person name="Koehrsen M."/>
            <person name="Engels R."/>
            <person name="Montgomery P."/>
            <person name="Pearson M."/>
            <person name="Howarth C."/>
            <person name="Larson L."/>
            <person name="Luoma S."/>
            <person name="White J."/>
            <person name="Alvarado L."/>
            <person name="Kodira C.D."/>
            <person name="Zeng Q."/>
            <person name="Oleary S."/>
            <person name="Yandava C."/>
            <person name="Denning D.W."/>
            <person name="Nierman W.C."/>
            <person name="Milne T."/>
            <person name="Madden K."/>
        </authorList>
    </citation>
    <scope>NUCLEOTIDE SEQUENCE [LARGE SCALE GENOMIC DNA]</scope>
    <source>
        <strain>NIH 2624 / FGSC A1156</strain>
    </source>
</reference>
<reference key="2">
    <citation type="journal article" date="2012" name="ChemBioChem">
        <title>Identification of a key prenyltransferase involved in biosynthesis of the most abundant fungal meroterpenoids derived from 3,5-dimethylorsellinic acid.</title>
        <authorList>
            <person name="Itoh T."/>
            <person name="Tokunaga K."/>
            <person name="Radhakrishnan E.K."/>
            <person name="Fujii I."/>
            <person name="Abe I."/>
            <person name="Ebizuka Y."/>
            <person name="Kushiro T."/>
        </authorList>
    </citation>
    <scope>FUNCTION</scope>
</reference>
<reference key="3">
    <citation type="journal article" date="2012" name="ChemBioChem">
        <title>Terretonin biosynthesis requires methylation as essential step for cyclization.</title>
        <authorList>
            <person name="Matsuda Y."/>
            <person name="Awakawa T."/>
            <person name="Itoh T."/>
            <person name="Wakimoto T."/>
            <person name="Kushiro T."/>
            <person name="Fujii I."/>
            <person name="Ebizuka Y."/>
            <person name="Abe I."/>
        </authorList>
    </citation>
    <scope>FUNCTION</scope>
</reference>
<reference key="4">
    <citation type="journal article" date="2012" name="Org. Lett.">
        <title>Molecular genetic characterization of a cluster in A. terreus for biosynthesis of the meroterpenoid terretonin.</title>
        <authorList>
            <person name="Guo C.J."/>
            <person name="Knox B.P."/>
            <person name="Chiang Y.M."/>
            <person name="Lo H.C."/>
            <person name="Sanchez J.F."/>
            <person name="Lee K.H."/>
            <person name="Oakley B.R."/>
            <person name="Bruno K.S."/>
            <person name="Wang C.C."/>
        </authorList>
    </citation>
    <scope>FUNCTION</scope>
    <scope>DISRUPTION PHENOTYPE</scope>
</reference>
<reference key="5">
    <citation type="journal article" date="2015" name="J. Am. Chem. Soc.">
        <title>Uncovering the unusual D-ring construction in terretonin biosynthesis by collaboration of a multifunctional cytochrome P450 and a unique isomerase.</title>
        <authorList>
            <person name="Matsuda Y."/>
            <person name="Iwabuchi T."/>
            <person name="Wakimoto T."/>
            <person name="Awakawa T."/>
            <person name="Abe I."/>
        </authorList>
    </citation>
    <scope>FUNCTION</scope>
    <scope>CATALYTIC ACTIVITY</scope>
</reference>
<reference key="6">
    <citation type="journal article" date="2017" name="Nat. Chem. Biol.">
        <title>Molecular basis for the unusual ring reconstruction in fungal meroterpenoid biogenesis.</title>
        <authorList>
            <person name="Mori T."/>
            <person name="Iwabuchi T."/>
            <person name="Hoshino S."/>
            <person name="Wang H."/>
            <person name="Matsuda Y."/>
            <person name="Abe I."/>
        </authorList>
    </citation>
    <scope>FUNCTION</scope>
</reference>
<organism>
    <name type="scientific">Aspergillus terreus (strain NIH 2624 / FGSC A1156)</name>
    <dbReference type="NCBI Taxonomy" id="341663"/>
    <lineage>
        <taxon>Eukaryota</taxon>
        <taxon>Fungi</taxon>
        <taxon>Dikarya</taxon>
        <taxon>Ascomycota</taxon>
        <taxon>Pezizomycotina</taxon>
        <taxon>Eurotiomycetes</taxon>
        <taxon>Eurotiomycetidae</taxon>
        <taxon>Eurotiales</taxon>
        <taxon>Aspergillaceae</taxon>
        <taxon>Aspergillus</taxon>
        <taxon>Aspergillus subgen. Circumdati</taxon>
    </lineage>
</organism>
<sequence>MTGQAEAIRRVHPTVSPKQAAQMLQEDGVIILKSFLAPDVMQRFQAEVDEDVEKTSTGARMKAYKLVNDKTKHMADLIVRSEVFRSDILTHPLYHAIADELFRADYGDHWLNASAVLQLMPGAPAQQLHRDEEIFAASKFRSPTDPQLSLSCLVALTEFTEENGATRLIPGSHLWDSAHPAPSPDQTVPAIMQPGEAILFLGSLFHGGGENRTENVRRGLGMSLIPCQFTPYSSHMHVPRTIIETMTPLAQKLVGWRTVESHRQYPFWQGGDRRLEDVLGLASREA</sequence>
<evidence type="ECO:0000250" key="1">
    <source>
        <dbReference type="UniProtKB" id="O14832"/>
    </source>
</evidence>
<evidence type="ECO:0000250" key="2">
    <source>
        <dbReference type="UniProtKB" id="Q4WAW9"/>
    </source>
</evidence>
<evidence type="ECO:0000269" key="3">
    <source>
    </source>
</evidence>
<evidence type="ECO:0000269" key="4">
    <source>
    </source>
</evidence>
<evidence type="ECO:0000269" key="5">
    <source>
    </source>
</evidence>
<evidence type="ECO:0000269" key="6">
    <source>
    </source>
</evidence>
<evidence type="ECO:0000269" key="7">
    <source>
    </source>
</evidence>
<evidence type="ECO:0000303" key="8">
    <source>
    </source>
</evidence>
<evidence type="ECO:0000305" key="9"/>
<protein>
    <recommendedName>
        <fullName evidence="8">Dioxygenase trt7</fullName>
        <ecNumber evidence="6">1.14.11.-</ecNumber>
    </recommendedName>
    <alternativeName>
        <fullName evidence="8">Terretonin synthesis protein 7</fullName>
    </alternativeName>
</protein>
<keyword id="KW-0223">Dioxygenase</keyword>
<keyword id="KW-0408">Iron</keyword>
<keyword id="KW-0479">Metal-binding</keyword>
<keyword id="KW-0560">Oxidoreductase</keyword>
<keyword id="KW-1185">Reference proteome</keyword>
<accession>Q0C8A0</accession>
<proteinExistence type="evidence at protein level"/>
<comment type="function">
    <text evidence="3 4 5 6 7">Dioxygenase; part of the gene cluster that mediates the biosynthesis of terretonin, a fungal meroterpenoid that acts as a mycotoxin (PubMed:22549923, PubMed:23116177, PubMed:25671343). The first step of the pathway is the synthesis of 3,5-dimethylorsellinic acid (DMOA) by the polyketide synthase trt4 (PubMed:22549923, PubMed:23116177). DMOA is then prenylated into farnesyl-DMOA by the polyprenyl transferase trt2 (PubMed:22549923, PubMed:22782788, PubMed:23116177). Methylation by the methyltransferase trt5 then leads to farnesyl-DMOA methyl ester which is further subject to epoxidation by the FAD-dependent monooxygenase trt8 to yield epoxyfarnesyl-DMOA methyl ester (PubMed:22549923, PubMed:22782788, PubMed:23116177). Cyclization of epoxyfarnesyl-DMOA methyl ester by the terpene cyclase trt1 leads to a tetracycle intermediate which is in turn converted to preterretonin (PubMed:22549923, PubMed:22782788, PubMed:23116177). Dehydrogenase trt9 comes next to transform preterretonin to preterrenoid (PubMed:22549923, PubMed:23116177). The FAD-dependent monooxygenase trt3 is then required for the C-hydroxylation at C16 of preterrenoid to yield terrenoid (PubMed:22549923, PubMed:23116177). The cytochrome P450 trt6 catalyzes three successive oxidations to transform terrenoid into an unstable intermediate, which then undergoes the D-ring expansion and unusual rearrangement of the methoxy group to afford the core skeleton of terretonin (PubMed:25671343, PubMed:28759016). Trt14 catalyzes the D-ring expansion of terretonin involving intramolecular methoxy rearrangement as well as the hydrolysis of the expanded D-ring and the methyl ester moiety (PubMed:25671343, PubMed:28759016). Finally, the nonheme iron-dependent dioxygenase trt7 accomplishes the last two oxidation reactions steps to complete the biosynthesis of terretonin (PubMed:25671343). Terretonin C is produced via spontaneous decarboxylation of the terretonin precursor (PubMed:23116177). Another shunt product of the terretonin biosynthesis is dihydrofarnesyl-DMOA, derived from epoxyfarnesyl-DMOA through hydrolysis of the epoxide (PubMed:22549923, PubMed:22782788, PubMed:23116177).</text>
</comment>
<comment type="cofactor">
    <cofactor evidence="2">
        <name>Fe cation</name>
        <dbReference type="ChEBI" id="CHEBI:24875"/>
    </cofactor>
</comment>
<comment type="pathway">
    <text evidence="5">Secondary metabolite biosynthesis; terpenoid biosynthesis.</text>
</comment>
<comment type="subunit">
    <text evidence="2">Homodimer.</text>
</comment>
<comment type="disruption phenotype">
    <text evidence="5">Impairs the synthesis of both terretonin and terretonin C (PubMed:23116177).</text>
</comment>
<comment type="similarity">
    <text evidence="9">Belongs to the PhyH family.</text>
</comment>
<name>TRT7_ASPTN</name>
<dbReference type="EC" id="1.14.11.-" evidence="6"/>
<dbReference type="EMBL" id="CH476609">
    <property type="protein sequence ID" value="EAU29533.1"/>
    <property type="molecule type" value="Genomic_DNA"/>
</dbReference>
<dbReference type="RefSeq" id="XP_001209386.1">
    <property type="nucleotide sequence ID" value="XM_001209386.1"/>
</dbReference>
<dbReference type="SMR" id="Q0C8A0"/>
<dbReference type="STRING" id="341663.Q0C8A0"/>
<dbReference type="EnsemblFungi" id="EAU29533">
    <property type="protein sequence ID" value="EAU29533"/>
    <property type="gene ID" value="ATEG_10084"/>
</dbReference>
<dbReference type="GeneID" id="4319491"/>
<dbReference type="VEuPathDB" id="FungiDB:ATEG_10084"/>
<dbReference type="eggNOG" id="ENOG502S7ZW">
    <property type="taxonomic scope" value="Eukaryota"/>
</dbReference>
<dbReference type="HOGENOM" id="CLU_047725_0_1_1"/>
<dbReference type="OMA" id="HRDESTH"/>
<dbReference type="OrthoDB" id="445007at2759"/>
<dbReference type="UniPathway" id="UPA00213"/>
<dbReference type="Proteomes" id="UP000007963">
    <property type="component" value="Unassembled WGS sequence"/>
</dbReference>
<dbReference type="GO" id="GO:0051213">
    <property type="term" value="F:dioxygenase activity"/>
    <property type="evidence" value="ECO:0007669"/>
    <property type="project" value="UniProtKB-KW"/>
</dbReference>
<dbReference type="GO" id="GO:0046872">
    <property type="term" value="F:metal ion binding"/>
    <property type="evidence" value="ECO:0007669"/>
    <property type="project" value="UniProtKB-KW"/>
</dbReference>
<dbReference type="GO" id="GO:0016114">
    <property type="term" value="P:terpenoid biosynthetic process"/>
    <property type="evidence" value="ECO:0007669"/>
    <property type="project" value="UniProtKB-UniPathway"/>
</dbReference>
<dbReference type="Gene3D" id="2.60.120.620">
    <property type="entry name" value="q2cbj1_9rhob like domain"/>
    <property type="match status" value="1"/>
</dbReference>
<dbReference type="InterPro" id="IPR008775">
    <property type="entry name" value="Phytyl_CoA_dOase-like"/>
</dbReference>
<dbReference type="PANTHER" id="PTHR20883:SF41">
    <property type="entry name" value="IRON_ALPHA-KETOGLUTARATE-DEPENDENT DIOXYGENASE ASQJ"/>
    <property type="match status" value="1"/>
</dbReference>
<dbReference type="PANTHER" id="PTHR20883">
    <property type="entry name" value="PHYTANOYL-COA DIOXYGENASE DOMAIN CONTAINING 1"/>
    <property type="match status" value="1"/>
</dbReference>
<dbReference type="Pfam" id="PF05721">
    <property type="entry name" value="PhyH"/>
    <property type="match status" value="1"/>
</dbReference>
<dbReference type="SUPFAM" id="SSF51197">
    <property type="entry name" value="Clavaminate synthase-like"/>
    <property type="match status" value="1"/>
</dbReference>
<feature type="chain" id="PRO_0000436596" description="Dioxygenase trt7">
    <location>
        <begin position="1"/>
        <end position="286"/>
    </location>
</feature>
<feature type="binding site" evidence="1">
    <location>
        <position position="129"/>
    </location>
    <ligand>
        <name>Fe cation</name>
        <dbReference type="ChEBI" id="CHEBI:24875"/>
    </ligand>
</feature>
<feature type="binding site" evidence="1">
    <location>
        <position position="131"/>
    </location>
    <ligand>
        <name>Fe cation</name>
        <dbReference type="ChEBI" id="CHEBI:24875"/>
    </ligand>
</feature>
<feature type="binding site" evidence="1">
    <location>
        <position position="206"/>
    </location>
    <ligand>
        <name>Fe cation</name>
        <dbReference type="ChEBI" id="CHEBI:24875"/>
    </ligand>
</feature>
<gene>
    <name evidence="8" type="primary">trt7</name>
    <name type="ORF">ATEG_10084</name>
</gene>